<feature type="signal peptide" evidence="3">
    <location>
        <begin position="1"/>
        <end position="21"/>
    </location>
</feature>
<feature type="chain" id="PRO_0000032483" description="Protein Z-dependent protease inhibitor">
    <location>
        <begin position="22"/>
        <end position="448"/>
    </location>
</feature>
<feature type="region of interest" description="Disordered" evidence="4">
    <location>
        <begin position="33"/>
        <end position="70"/>
    </location>
</feature>
<feature type="region of interest" description="Heparin-binding" evidence="1">
    <location>
        <begin position="140"/>
        <end position="157"/>
    </location>
</feature>
<feature type="compositionally biased region" description="Acidic residues" evidence="4">
    <location>
        <begin position="54"/>
        <end position="63"/>
    </location>
</feature>
<feature type="site" description="Essential for interaction with PROZ">
    <location>
        <position position="265"/>
    </location>
</feature>
<feature type="site" description="Essential for interaction with PROZ">
    <location>
        <position position="318"/>
    </location>
</feature>
<feature type="site" description="Reactive bond" evidence="1">
    <location>
        <begin position="412"/>
        <end position="413"/>
    </location>
</feature>
<feature type="glycosylation site" description="N-linked (GlcNAc...) asparagine" evidence="6 7">
    <location>
        <position position="81"/>
    </location>
</feature>
<feature type="glycosylation site" description="N-linked (GlcNAc...) asparagine" evidence="6">
    <location>
        <position position="184"/>
    </location>
</feature>
<feature type="glycosylation site" description="N-linked (GlcNAc...) asparagine" evidence="6">
    <location>
        <position position="278"/>
    </location>
</feature>
<feature type="glycosylation site" description="N-linked (GlcNAc...) asparagine" evidence="6">
    <location>
        <position position="299"/>
    </location>
</feature>
<feature type="splice variant" id="VSP_014439" description="In isoform 2." evidence="9">
    <location>
        <begin position="245"/>
        <end position="298"/>
    </location>
</feature>
<feature type="mutagenesis site" description="2-fold decrease in rates of factor Xa inhibition." evidence="8">
    <original>M</original>
    <variation>A</variation>
    <location>
        <position position="96"/>
    </location>
</feature>
<feature type="mutagenesis site" description="5-fold decrease in rates of factor Xa inhibition." evidence="8">
    <original>D</original>
    <variation>A</variation>
    <location>
        <position position="99"/>
    </location>
</feature>
<feature type="mutagenesis site" description="No change in rates of factor Xa inhibition." evidence="8">
    <original>D</original>
    <variation>A</variation>
    <location>
        <position position="263"/>
    </location>
</feature>
<feature type="mutagenesis site" description="No change in rates of factor Xa inhibition." evidence="8">
    <original>K</original>
    <variation>A</variation>
    <location>
        <position position="264"/>
    </location>
</feature>
<feature type="mutagenesis site" description="50-fold decrease in rates of factor Xa inhibition." evidence="8">
    <original>Y</original>
    <variation>A</variation>
    <location>
        <position position="265"/>
    </location>
</feature>
<feature type="mutagenesis site" description="400-fold decrease in rates of factor Xa inhibition." evidence="8">
    <original>D</original>
    <variation>A</variation>
    <location>
        <position position="318"/>
    </location>
</feature>
<feature type="helix" evidence="11">
    <location>
        <begin position="71"/>
        <end position="75"/>
    </location>
</feature>
<feature type="helix" evidence="11">
    <location>
        <begin position="77"/>
        <end position="97"/>
    </location>
</feature>
<feature type="strand" evidence="11">
    <location>
        <begin position="102"/>
        <end position="104"/>
    </location>
</feature>
<feature type="helix" evidence="11">
    <location>
        <begin position="106"/>
        <end position="119"/>
    </location>
</feature>
<feature type="helix" evidence="11">
    <location>
        <begin position="123"/>
        <end position="132"/>
    </location>
</feature>
<feature type="helix" evidence="11">
    <location>
        <begin position="135"/>
        <end position="138"/>
    </location>
</feature>
<feature type="helix" evidence="11">
    <location>
        <begin position="144"/>
        <end position="157"/>
    </location>
</feature>
<feature type="strand" evidence="11">
    <location>
        <begin position="164"/>
        <end position="173"/>
    </location>
</feature>
<feature type="helix" evidence="11">
    <location>
        <begin position="180"/>
        <end position="189"/>
    </location>
</feature>
<feature type="strand" evidence="11">
    <location>
        <begin position="194"/>
        <end position="197"/>
    </location>
</feature>
<feature type="helix" evidence="11">
    <location>
        <begin position="202"/>
        <end position="216"/>
    </location>
</feature>
<feature type="turn" evidence="11">
    <location>
        <begin position="217"/>
        <end position="219"/>
    </location>
</feature>
<feature type="strand" evidence="11">
    <location>
        <begin position="234"/>
        <end position="242"/>
    </location>
</feature>
<feature type="strand" evidence="11">
    <location>
        <begin position="246"/>
        <end position="248"/>
    </location>
</feature>
<feature type="helix" evidence="11">
    <location>
        <begin position="252"/>
        <end position="254"/>
    </location>
</feature>
<feature type="strand" evidence="11">
    <location>
        <begin position="256"/>
        <end position="265"/>
    </location>
</feature>
<feature type="strand" evidence="11">
    <location>
        <begin position="267"/>
        <end position="284"/>
    </location>
</feature>
<feature type="turn" evidence="11">
    <location>
        <begin position="285"/>
        <end position="288"/>
    </location>
</feature>
<feature type="strand" evidence="11">
    <location>
        <begin position="289"/>
        <end position="296"/>
    </location>
</feature>
<feature type="helix" evidence="11">
    <location>
        <begin position="297"/>
        <end position="299"/>
    </location>
</feature>
<feature type="strand" evidence="11">
    <location>
        <begin position="300"/>
        <end position="307"/>
    </location>
</feature>
<feature type="helix" evidence="11">
    <location>
        <begin position="313"/>
        <end position="316"/>
    </location>
</feature>
<feature type="turn" evidence="11">
    <location>
        <begin position="317"/>
        <end position="319"/>
    </location>
</feature>
<feature type="helix" evidence="11">
    <location>
        <begin position="322"/>
        <end position="330"/>
    </location>
</feature>
<feature type="strand" evidence="11">
    <location>
        <begin position="333"/>
        <end position="342"/>
    </location>
</feature>
<feature type="strand" evidence="11">
    <location>
        <begin position="344"/>
        <end position="351"/>
    </location>
</feature>
<feature type="helix" evidence="11">
    <location>
        <begin position="353"/>
        <end position="358"/>
    </location>
</feature>
<feature type="helix" evidence="11">
    <location>
        <begin position="363"/>
        <end position="365"/>
    </location>
</feature>
<feature type="turn" evidence="11">
    <location>
        <begin position="372"/>
        <end position="374"/>
    </location>
</feature>
<feature type="strand" evidence="11">
    <location>
        <begin position="385"/>
        <end position="394"/>
    </location>
</feature>
<feature type="strand" evidence="11">
    <location>
        <begin position="417"/>
        <end position="419"/>
    </location>
</feature>
<feature type="strand" evidence="11">
    <location>
        <begin position="424"/>
        <end position="430"/>
    </location>
</feature>
<feature type="turn" evidence="11">
    <location>
        <begin position="431"/>
        <end position="434"/>
    </location>
</feature>
<feature type="strand" evidence="11">
    <location>
        <begin position="435"/>
        <end position="444"/>
    </location>
</feature>
<proteinExistence type="evidence at protein level"/>
<keyword id="KW-0002">3D-structure</keyword>
<keyword id="KW-0025">Alternative splicing</keyword>
<keyword id="KW-0094">Blood coagulation</keyword>
<keyword id="KW-0325">Glycoprotein</keyword>
<keyword id="KW-0356">Hemostasis</keyword>
<keyword id="KW-0358">Heparin-binding</keyword>
<keyword id="KW-0646">Protease inhibitor</keyword>
<keyword id="KW-1185">Reference proteome</keyword>
<keyword id="KW-0964">Secreted</keyword>
<keyword id="KW-0722">Serine protease inhibitor</keyword>
<keyword id="KW-0732">Signal</keyword>
<gene>
    <name type="primary">Serpina10</name>
    <name type="synonym">Zpi</name>
</gene>
<comment type="function">
    <text evidence="1">Inhibits activity of the coagulation protease factor Xa in the presence of PROZ, calcium and phospholipids. Also inhibits factor XIa in the absence of cofactors (By similarity).</text>
</comment>
<comment type="subcellular location">
    <subcellularLocation>
        <location evidence="1">Secreted</location>
    </subcellularLocation>
</comment>
<comment type="alternative products">
    <event type="alternative splicing"/>
    <isoform>
        <id>Q8R121-1</id>
        <name>1</name>
        <sequence type="displayed"/>
    </isoform>
    <isoform>
        <id>Q8R121-2</id>
        <name>2</name>
        <sequence type="described" ref="VSP_014439"/>
    </isoform>
</comment>
<comment type="tissue specificity">
    <text evidence="5">Detectable in liver, but not in heart, brain, spleen, lung, kidney, skeletal muscle or testes.</text>
</comment>
<comment type="PTM">
    <text evidence="2">Phosphorylated by FAM20C in the extracellular medium.</text>
</comment>
<comment type="miscellaneous">
    <text evidence="1">Heparin acts as an important cofactor, producing 20 to 100-fold accelerations of SERPINA10 reactions with factor Xa and factor XIa.</text>
</comment>
<comment type="miscellaneous">
    <molecule>Isoform 2</molecule>
    <text evidence="10">May be due to a competing acceptor splice site.</text>
</comment>
<comment type="similarity">
    <text evidence="10">Belongs to the serpin family.</text>
</comment>
<organism>
    <name type="scientific">Mus musculus</name>
    <name type="common">Mouse</name>
    <dbReference type="NCBI Taxonomy" id="10090"/>
    <lineage>
        <taxon>Eukaryota</taxon>
        <taxon>Metazoa</taxon>
        <taxon>Chordata</taxon>
        <taxon>Craniata</taxon>
        <taxon>Vertebrata</taxon>
        <taxon>Euteleostomi</taxon>
        <taxon>Mammalia</taxon>
        <taxon>Eutheria</taxon>
        <taxon>Euarchontoglires</taxon>
        <taxon>Glires</taxon>
        <taxon>Rodentia</taxon>
        <taxon>Myomorpha</taxon>
        <taxon>Muroidea</taxon>
        <taxon>Muridae</taxon>
        <taxon>Murinae</taxon>
        <taxon>Mus</taxon>
        <taxon>Mus</taxon>
    </lineage>
</organism>
<sequence>MRVASSLFLPVLLTEVWLVTSFNLSSHSPEASVHLESQDYENQTWEEYTRTDPREEEEEEEEKEEGKDEEYWLRASQQLSNETSSFGFNLLRKISMRHDGNVIFSPFGLSVAMVNLMLGTKGETKVQIENGLNLQALSQAGPLILPALFKKVKETFSSNRDLGLSQGSFAFIHKDFDIKETYFNLSKKYFDIEYVSINFQNSSQARGLINHCIVKETEGKIPKLFDEINPETKLILVDYVLFKGKWLTPFDPSFTEADTFHLDKYRAIKVPMMYREGNFTSTFDKKFRCHILKLPYQGNATMLVVLMEKTGDYLALEDYLTVDLVETWLQNMKTRKMEVFFPKFKLNQRYEMHELLKQMGIRRLFSTSADLSELSAMARNLQVSRVLQQSVLEVDERGTEAVSGTLSEIIAYSMPPAIKVNRPFHFIIYEEMSRMLLFLGRVVNPTVL</sequence>
<evidence type="ECO:0000250" key="1"/>
<evidence type="ECO:0000250" key="2">
    <source>
        <dbReference type="UniProtKB" id="Q9UK55"/>
    </source>
</evidence>
<evidence type="ECO:0000255" key="3"/>
<evidence type="ECO:0000256" key="4">
    <source>
        <dbReference type="SAM" id="MobiDB-lite"/>
    </source>
</evidence>
<evidence type="ECO:0000269" key="5">
    <source>
    </source>
</evidence>
<evidence type="ECO:0000269" key="6">
    <source>
    </source>
</evidence>
<evidence type="ECO:0000269" key="7">
    <source>
    </source>
</evidence>
<evidence type="ECO:0000269" key="8">
    <source>
    </source>
</evidence>
<evidence type="ECO:0000303" key="9">
    <source>
    </source>
</evidence>
<evidence type="ECO:0000305" key="10"/>
<evidence type="ECO:0007829" key="11">
    <source>
        <dbReference type="PDB" id="4AJT"/>
    </source>
</evidence>
<protein>
    <recommendedName>
        <fullName>Protein Z-dependent protease inhibitor</fullName>
        <shortName>PZ-dependent protease inhibitor</shortName>
        <shortName>PZI</shortName>
    </recommendedName>
    <alternativeName>
        <fullName>Serpin A10</fullName>
    </alternativeName>
</protein>
<name>ZPI_MOUSE</name>
<accession>Q8R121</accession>
<accession>Q8VCV8</accession>
<dbReference type="EMBL" id="AY324633">
    <property type="protein sequence ID" value="AAP87100.1"/>
    <property type="molecule type" value="mRNA"/>
</dbReference>
<dbReference type="EMBL" id="BC018416">
    <property type="protein sequence ID" value="AAH18416.1"/>
    <property type="molecule type" value="mRNA"/>
</dbReference>
<dbReference type="EMBL" id="BC025821">
    <property type="protein sequence ID" value="AAH25821.1"/>
    <property type="molecule type" value="mRNA"/>
</dbReference>
<dbReference type="CCDS" id="CCDS26134.1">
    <molecule id="Q8R121-1"/>
</dbReference>
<dbReference type="CCDS" id="CCDS79150.1">
    <molecule id="Q8R121-2"/>
</dbReference>
<dbReference type="RefSeq" id="NP_001288333.1">
    <molecule id="Q8R121-2"/>
    <property type="nucleotide sequence ID" value="NM_001301404.2"/>
</dbReference>
<dbReference type="RefSeq" id="NP_659083.2">
    <molecule id="Q8R121-1"/>
    <property type="nucleotide sequence ID" value="NM_144834.4"/>
</dbReference>
<dbReference type="PDB" id="4AJT">
    <property type="method" value="X-ray"/>
    <property type="resolution" value="2.50 A"/>
    <property type="chains" value="A=22-448"/>
</dbReference>
<dbReference type="PDBsum" id="4AJT"/>
<dbReference type="SMR" id="Q8R121"/>
<dbReference type="FunCoup" id="Q8R121">
    <property type="interactions" value="483"/>
</dbReference>
<dbReference type="STRING" id="10090.ENSMUSP00000048357"/>
<dbReference type="MEROPS" id="I04.005"/>
<dbReference type="GlyCosmos" id="Q8R121">
    <property type="glycosylation" value="4 sites, No reported glycans"/>
</dbReference>
<dbReference type="GlyGen" id="Q8R121">
    <property type="glycosylation" value="4 sites, 2 N-linked glycans (2 sites)"/>
</dbReference>
<dbReference type="iPTMnet" id="Q8R121"/>
<dbReference type="PhosphoSitePlus" id="Q8R121"/>
<dbReference type="CPTAC" id="non-CPTAC-3888"/>
<dbReference type="CPTAC" id="non-CPTAC-5623"/>
<dbReference type="jPOST" id="Q8R121"/>
<dbReference type="PaxDb" id="10090-ENSMUSP00000048357"/>
<dbReference type="PeptideAtlas" id="Q8R121"/>
<dbReference type="ProteomicsDB" id="275240">
    <molecule id="Q8R121-1"/>
</dbReference>
<dbReference type="ProteomicsDB" id="275241">
    <molecule id="Q8R121-2"/>
</dbReference>
<dbReference type="Antibodypedia" id="27029">
    <property type="antibodies" value="348 antibodies from 38 providers"/>
</dbReference>
<dbReference type="DNASU" id="217847"/>
<dbReference type="Ensembl" id="ENSMUST00000044231.12">
    <molecule id="Q8R121-1"/>
    <property type="protein sequence ID" value="ENSMUSP00000048357.6"/>
    <property type="gene ID" value="ENSMUSG00000061947.11"/>
</dbReference>
<dbReference type="Ensembl" id="ENSMUST00000121625.2">
    <molecule id="Q8R121-2"/>
    <property type="protein sequence ID" value="ENSMUSP00000113644.2"/>
    <property type="gene ID" value="ENSMUSG00000061947.11"/>
</dbReference>
<dbReference type="GeneID" id="217847"/>
<dbReference type="KEGG" id="mmu:217847"/>
<dbReference type="UCSC" id="uc007ovz.2">
    <molecule id="Q8R121-1"/>
    <property type="organism name" value="mouse"/>
</dbReference>
<dbReference type="UCSC" id="uc011yra.2">
    <molecule id="Q8R121-2"/>
    <property type="organism name" value="mouse"/>
</dbReference>
<dbReference type="AGR" id="MGI:2667725"/>
<dbReference type="CTD" id="51156"/>
<dbReference type="MGI" id="MGI:2667725">
    <property type="gene designation" value="Serpina10"/>
</dbReference>
<dbReference type="VEuPathDB" id="HostDB:ENSMUSG00000061947"/>
<dbReference type="eggNOG" id="KOG2392">
    <property type="taxonomic scope" value="Eukaryota"/>
</dbReference>
<dbReference type="GeneTree" id="ENSGT00940000159462"/>
<dbReference type="HOGENOM" id="CLU_023330_2_1_1"/>
<dbReference type="InParanoid" id="Q8R121"/>
<dbReference type="OMA" id="METFHIN"/>
<dbReference type="OrthoDB" id="10063692at2759"/>
<dbReference type="PhylomeDB" id="Q8R121"/>
<dbReference type="TreeFam" id="TF343094"/>
<dbReference type="Reactome" id="R-MMU-381426">
    <property type="pathway name" value="Regulation of Insulin-like Growth Factor (IGF) transport and uptake by Insulin-like Growth Factor Binding Proteins (IGFBPs)"/>
</dbReference>
<dbReference type="Reactome" id="R-MMU-8957275">
    <property type="pathway name" value="Post-translational protein phosphorylation"/>
</dbReference>
<dbReference type="BioGRID-ORCS" id="217847">
    <property type="hits" value="2 hits in 76 CRISPR screens"/>
</dbReference>
<dbReference type="EvolutionaryTrace" id="Q8R121"/>
<dbReference type="PRO" id="PR:Q8R121"/>
<dbReference type="Proteomes" id="UP000000589">
    <property type="component" value="Chromosome 12"/>
</dbReference>
<dbReference type="RNAct" id="Q8R121">
    <property type="molecule type" value="protein"/>
</dbReference>
<dbReference type="Bgee" id="ENSMUSG00000061947">
    <property type="expression patterns" value="Expressed in left lobe of liver and 51 other cell types or tissues"/>
</dbReference>
<dbReference type="GO" id="GO:0005615">
    <property type="term" value="C:extracellular space"/>
    <property type="evidence" value="ECO:0007669"/>
    <property type="project" value="InterPro"/>
</dbReference>
<dbReference type="GO" id="GO:0008201">
    <property type="term" value="F:heparin binding"/>
    <property type="evidence" value="ECO:0007669"/>
    <property type="project" value="UniProtKB-KW"/>
</dbReference>
<dbReference type="GO" id="GO:0004867">
    <property type="term" value="F:serine-type endopeptidase inhibitor activity"/>
    <property type="evidence" value="ECO:0007669"/>
    <property type="project" value="UniProtKB-KW"/>
</dbReference>
<dbReference type="GO" id="GO:0007596">
    <property type="term" value="P:blood coagulation"/>
    <property type="evidence" value="ECO:0007669"/>
    <property type="project" value="UniProtKB-KW"/>
</dbReference>
<dbReference type="GO" id="GO:0097421">
    <property type="term" value="P:liver regeneration"/>
    <property type="evidence" value="ECO:0007669"/>
    <property type="project" value="Ensembl"/>
</dbReference>
<dbReference type="CDD" id="cd02055">
    <property type="entry name" value="serpinA10_PZI"/>
    <property type="match status" value="1"/>
</dbReference>
<dbReference type="FunFam" id="2.30.39.10:FF:000003">
    <property type="entry name" value="alpha-1-antitrypsin isoform X1"/>
    <property type="match status" value="1"/>
</dbReference>
<dbReference type="FunFam" id="3.30.497.10:FF:000001">
    <property type="entry name" value="Serine protease inhibitor"/>
    <property type="match status" value="1"/>
</dbReference>
<dbReference type="Gene3D" id="2.30.39.10">
    <property type="entry name" value="Alpha-1-antitrypsin, domain 1"/>
    <property type="match status" value="1"/>
</dbReference>
<dbReference type="Gene3D" id="3.30.497.10">
    <property type="entry name" value="Antithrombin, subunit I, domain 2"/>
    <property type="match status" value="1"/>
</dbReference>
<dbReference type="InterPro" id="IPR033835">
    <property type="entry name" value="PZI_serpin_dom"/>
</dbReference>
<dbReference type="InterPro" id="IPR023796">
    <property type="entry name" value="Serpin_dom"/>
</dbReference>
<dbReference type="InterPro" id="IPR000215">
    <property type="entry name" value="Serpin_fam"/>
</dbReference>
<dbReference type="InterPro" id="IPR036186">
    <property type="entry name" value="Serpin_sf"/>
</dbReference>
<dbReference type="InterPro" id="IPR042178">
    <property type="entry name" value="Serpin_sf_1"/>
</dbReference>
<dbReference type="InterPro" id="IPR042185">
    <property type="entry name" value="Serpin_sf_2"/>
</dbReference>
<dbReference type="PANTHER" id="PTHR11461:SF191">
    <property type="entry name" value="PROTEIN Z-DEPENDENT PROTEASE INHIBITOR"/>
    <property type="match status" value="1"/>
</dbReference>
<dbReference type="PANTHER" id="PTHR11461">
    <property type="entry name" value="SERINE PROTEASE INHIBITOR, SERPIN"/>
    <property type="match status" value="1"/>
</dbReference>
<dbReference type="Pfam" id="PF00079">
    <property type="entry name" value="Serpin"/>
    <property type="match status" value="1"/>
</dbReference>
<dbReference type="PRINTS" id="PR00780">
    <property type="entry name" value="LEUSERPINII"/>
</dbReference>
<dbReference type="SMART" id="SM00093">
    <property type="entry name" value="SERPIN"/>
    <property type="match status" value="1"/>
</dbReference>
<dbReference type="SUPFAM" id="SSF56574">
    <property type="entry name" value="Serpins"/>
    <property type="match status" value="1"/>
</dbReference>
<reference key="1">
    <citation type="journal article" date="2001" name="Thromb. Haemost.">
        <title>Mouse protein Z-dependent protease inhibitor cDNA.</title>
        <authorList>
            <person name="Zhang J."/>
            <person name="Broze G.J. Jr."/>
        </authorList>
    </citation>
    <scope>NUCLEOTIDE SEQUENCE [MRNA] (ISOFORM 1)</scope>
    <scope>TISSUE SPECIFICITY</scope>
    <source>
        <strain>BALB/cJ</strain>
        <tissue>Liver</tissue>
    </source>
</reference>
<reference key="2">
    <citation type="journal article" date="2004" name="Genome Res.">
        <title>The status, quality, and expansion of the NIH full-length cDNA project: the Mammalian Gene Collection (MGC).</title>
        <authorList>
            <consortium name="The MGC Project Team"/>
        </authorList>
    </citation>
    <scope>NUCLEOTIDE SEQUENCE [LARGE SCALE MRNA] (ISOFORMS 1 AND 2)</scope>
    <source>
        <strain>FVB/N</strain>
        <tissue>Liver</tissue>
    </source>
</reference>
<reference key="3">
    <citation type="journal article" date="2006" name="J. Proteome Res.">
        <title>Proteome-wide characterization of N-glycosylation events by diagonal chromatography.</title>
        <authorList>
            <person name="Ghesquiere B."/>
            <person name="Van Damme J."/>
            <person name="Martens L."/>
            <person name="Vandekerckhove J."/>
            <person name="Gevaert K."/>
        </authorList>
    </citation>
    <scope>GLYCOSYLATION [LARGE SCALE ANALYSIS] AT ASN-81; ASN-184; ASN-278 AND ASN-299</scope>
    <source>
        <strain>C57BL/6J</strain>
        <tissue>Plasma</tissue>
    </source>
</reference>
<reference key="4">
    <citation type="journal article" date="2007" name="J. Proteome Res.">
        <title>Enhanced analysis of the mouse plasma proteome using cysteine-containing tryptic glycopeptides.</title>
        <authorList>
            <person name="Bernhard O.K."/>
            <person name="Kapp E.A."/>
            <person name="Simpson R.J."/>
        </authorList>
    </citation>
    <scope>GLYCOSYLATION [LARGE SCALE ANALYSIS] AT ASN-81</scope>
    <source>
        <strain>C57BL/6J</strain>
        <tissue>Plasma</tissue>
    </source>
</reference>
<reference key="5">
    <citation type="journal article" date="2010" name="Cell">
        <title>A tissue-specific atlas of mouse protein phosphorylation and expression.</title>
        <authorList>
            <person name="Huttlin E.L."/>
            <person name="Jedrychowski M.P."/>
            <person name="Elias J.E."/>
            <person name="Goswami T."/>
            <person name="Rad R."/>
            <person name="Beausoleil S.A."/>
            <person name="Villen J."/>
            <person name="Haas W."/>
            <person name="Sowa M.E."/>
            <person name="Gygi S.P."/>
        </authorList>
    </citation>
    <scope>IDENTIFICATION BY MASS SPECTROMETRY [LARGE SCALE ANALYSIS]</scope>
    <source>
        <tissue>Heart</tissue>
        <tissue>Liver</tissue>
        <tissue>Lung</tissue>
    </source>
</reference>
<reference key="6">
    <citation type="journal article" date="2012" name="Blood">
        <title>Structural basis for catalytic activation of protein Z-dependent protease inhibitor (ZPI) by protein Z.</title>
        <authorList>
            <person name="Huang X."/>
            <person name="Yan Y."/>
            <person name="Tu Y."/>
            <person name="Gatti J."/>
            <person name="Broze G.J. Jr."/>
            <person name="Zhou A."/>
            <person name="Olson S.T."/>
        </authorList>
    </citation>
    <scope>X-RAY CRYSTALLOGRAPHY (2.5 ANGSTROMS) OF 22-448</scope>
    <scope>MUTAGENESIS OF MET-96; ASP-99; ASP-263; LYS-264; TYR-265 AND ASP-318</scope>
</reference>